<gene>
    <name evidence="1" type="primary">glnD</name>
    <name type="ordered locus">XOO1984</name>
</gene>
<name>GLND_XANOR</name>
<keyword id="KW-0378">Hydrolase</keyword>
<keyword id="KW-0460">Magnesium</keyword>
<keyword id="KW-0511">Multifunctional enzyme</keyword>
<keyword id="KW-0548">Nucleotidyltransferase</keyword>
<keyword id="KW-1185">Reference proteome</keyword>
<keyword id="KW-0677">Repeat</keyword>
<keyword id="KW-0808">Transferase</keyword>
<evidence type="ECO:0000255" key="1">
    <source>
        <dbReference type="HAMAP-Rule" id="MF_00277"/>
    </source>
</evidence>
<evidence type="ECO:0000255" key="2">
    <source>
        <dbReference type="PROSITE-ProRule" id="PRU01175"/>
    </source>
</evidence>
<evidence type="ECO:0000305" key="3"/>
<sequence>MTDAPAERPDPSVAGDADWAAQARPLLVHADMRLRKRFDQGEPIERLVALRARAVDQLMRNAWTRCIPADSGLSLHAVGGYGRGELFPRSDVDVLVLGDSVAQQRHEQHLSRLFALLWDVGLPISHAVRSPTQCMVAAADQTVLTALIESRALVADAAARAALAAAIAPQRVWPPRDFFQAKREELLARHQRFGDTADNLEPDIKDGPGGLRDLQTLGCMALRAFGVKDVEALVGLGHVGCDEAAALRREREELARLRFGLHIVANRPEERLRFDYQKTLAERLGFADDLESLGVEKMMQRFYRSAALIRRISDRLLQRFEEQFDGEATPESLGGGFSLRRGYLAADSDSWPGDDVLQVFALFVHWAAHREVRGLHSLTARALAEVLREFPAYDVADATARELFMALLRGTRAVETLNRMARLGVLGQWIPAFASVSGRMQFDLFHVYTVDQHTLMVLRNIALFAAGRADERFSIAHEVWPRLRKPELLLLAGLFHDIAKGRGGDHSELGAVDTRAFCLAHRLSEGDTELVTWLVEQHLRMSVTAQKQDISDPEVIHRFATLVGTRERLDYLYLLTCADIAGTSPKLWNAWKDRLLADLYFAARRALREGVEHPPPREERLREARESARALMQAQGHDDATIDRQFAGMPDENFLRFRPEQLAWQAASLIEVEIAQTLVKARRAVPDNDALEVFVYSPDRDGLFAAIVATLDRKGYGIHRARVLDAPHDAIFDVFEVLPRDTYADGDPQRLAATLRQVLAGDLQQVRPARRAVPGQLRHFRFAPRVEFSESADGRRTRISLVAPDRPGLLADVAHVLRVQHLRVHDARIATFGERAEDQFQITDEHDRPLSESARQALRDALCACLDPV</sequence>
<dbReference type="EC" id="2.7.7.59" evidence="1"/>
<dbReference type="EC" id="3.1.4.-" evidence="1"/>
<dbReference type="EMBL" id="AE013598">
    <property type="protein sequence ID" value="AAW75238.1"/>
    <property type="status" value="ALT_INIT"/>
    <property type="molecule type" value="Genomic_DNA"/>
</dbReference>
<dbReference type="SMR" id="Q5H1D3"/>
<dbReference type="STRING" id="291331.XOO1984"/>
<dbReference type="KEGG" id="xoo:XOO1984"/>
<dbReference type="HOGENOM" id="CLU_012833_0_0_6"/>
<dbReference type="Proteomes" id="UP000006735">
    <property type="component" value="Chromosome"/>
</dbReference>
<dbReference type="GO" id="GO:0008773">
    <property type="term" value="F:[protein-PII] uridylyltransferase activity"/>
    <property type="evidence" value="ECO:0007669"/>
    <property type="project" value="UniProtKB-UniRule"/>
</dbReference>
<dbReference type="GO" id="GO:0008081">
    <property type="term" value="F:phosphoric diester hydrolase activity"/>
    <property type="evidence" value="ECO:0007669"/>
    <property type="project" value="UniProtKB-UniRule"/>
</dbReference>
<dbReference type="GO" id="GO:0006808">
    <property type="term" value="P:regulation of nitrogen utilization"/>
    <property type="evidence" value="ECO:0007669"/>
    <property type="project" value="UniProtKB-UniRule"/>
</dbReference>
<dbReference type="CDD" id="cd04899">
    <property type="entry name" value="ACT_ACR-UUR-like_2"/>
    <property type="match status" value="1"/>
</dbReference>
<dbReference type="CDD" id="cd04900">
    <property type="entry name" value="ACT_UUR-like_1"/>
    <property type="match status" value="1"/>
</dbReference>
<dbReference type="CDD" id="cd00077">
    <property type="entry name" value="HDc"/>
    <property type="match status" value="1"/>
</dbReference>
<dbReference type="CDD" id="cd05401">
    <property type="entry name" value="NT_GlnE_GlnD_like"/>
    <property type="match status" value="1"/>
</dbReference>
<dbReference type="Gene3D" id="3.30.70.260">
    <property type="match status" value="1"/>
</dbReference>
<dbReference type="Gene3D" id="1.10.3090.10">
    <property type="entry name" value="cca-adding enzyme, domain 2"/>
    <property type="match status" value="1"/>
</dbReference>
<dbReference type="HAMAP" id="MF_00277">
    <property type="entry name" value="PII_uridylyl_transf"/>
    <property type="match status" value="1"/>
</dbReference>
<dbReference type="InterPro" id="IPR045865">
    <property type="entry name" value="ACT-like_dom_sf"/>
</dbReference>
<dbReference type="InterPro" id="IPR002912">
    <property type="entry name" value="ACT_dom"/>
</dbReference>
<dbReference type="InterPro" id="IPR003607">
    <property type="entry name" value="HD/PDEase_dom"/>
</dbReference>
<dbReference type="InterPro" id="IPR006674">
    <property type="entry name" value="HD_domain"/>
</dbReference>
<dbReference type="InterPro" id="IPR043519">
    <property type="entry name" value="NT_sf"/>
</dbReference>
<dbReference type="InterPro" id="IPR013546">
    <property type="entry name" value="PII_UdlTrfase/GS_AdlTrfase"/>
</dbReference>
<dbReference type="InterPro" id="IPR002934">
    <property type="entry name" value="Polymerase_NTP_transf_dom"/>
</dbReference>
<dbReference type="InterPro" id="IPR010043">
    <property type="entry name" value="UTase/UR"/>
</dbReference>
<dbReference type="NCBIfam" id="NF003347">
    <property type="entry name" value="PRK04374.1"/>
    <property type="match status" value="1"/>
</dbReference>
<dbReference type="NCBIfam" id="TIGR01693">
    <property type="entry name" value="UTase_glnD"/>
    <property type="match status" value="1"/>
</dbReference>
<dbReference type="PANTHER" id="PTHR47320">
    <property type="entry name" value="BIFUNCTIONAL URIDYLYLTRANSFERASE/URIDYLYL-REMOVING ENZYME"/>
    <property type="match status" value="1"/>
</dbReference>
<dbReference type="PANTHER" id="PTHR47320:SF1">
    <property type="entry name" value="BIFUNCTIONAL URIDYLYLTRANSFERASE_URIDYLYL-REMOVING ENZYME"/>
    <property type="match status" value="1"/>
</dbReference>
<dbReference type="Pfam" id="PF08335">
    <property type="entry name" value="GlnD_UR_UTase"/>
    <property type="match status" value="1"/>
</dbReference>
<dbReference type="Pfam" id="PF01966">
    <property type="entry name" value="HD"/>
    <property type="match status" value="1"/>
</dbReference>
<dbReference type="Pfam" id="PF01909">
    <property type="entry name" value="NTP_transf_2"/>
    <property type="match status" value="1"/>
</dbReference>
<dbReference type="PIRSF" id="PIRSF006288">
    <property type="entry name" value="PII_uridyltransf"/>
    <property type="match status" value="1"/>
</dbReference>
<dbReference type="SMART" id="SM00471">
    <property type="entry name" value="HDc"/>
    <property type="match status" value="1"/>
</dbReference>
<dbReference type="SUPFAM" id="SSF55021">
    <property type="entry name" value="ACT-like"/>
    <property type="match status" value="2"/>
</dbReference>
<dbReference type="SUPFAM" id="SSF109604">
    <property type="entry name" value="HD-domain/PDEase-like"/>
    <property type="match status" value="1"/>
</dbReference>
<dbReference type="SUPFAM" id="SSF81301">
    <property type="entry name" value="Nucleotidyltransferase"/>
    <property type="match status" value="1"/>
</dbReference>
<dbReference type="SUPFAM" id="SSF81593">
    <property type="entry name" value="Nucleotidyltransferase substrate binding subunit/domain"/>
    <property type="match status" value="1"/>
</dbReference>
<dbReference type="PROSITE" id="PS51671">
    <property type="entry name" value="ACT"/>
    <property type="match status" value="2"/>
</dbReference>
<dbReference type="PROSITE" id="PS51831">
    <property type="entry name" value="HD"/>
    <property type="match status" value="1"/>
</dbReference>
<accession>Q5H1D3</accession>
<protein>
    <recommendedName>
        <fullName evidence="1">Bifunctional uridylyltransferase/uridylyl-removing enzyme</fullName>
        <shortName evidence="1">UTase/UR</shortName>
    </recommendedName>
    <alternativeName>
        <fullName evidence="1">Bifunctional [protein-PII] modification enzyme</fullName>
    </alternativeName>
    <alternativeName>
        <fullName evidence="1">Bifunctional nitrogen sensor protein</fullName>
    </alternativeName>
    <domain>
        <recommendedName>
            <fullName evidence="1">[Protein-PII] uridylyltransferase</fullName>
            <shortName evidence="1">PII uridylyltransferase</shortName>
            <shortName evidence="1">UTase</shortName>
            <ecNumber evidence="1">2.7.7.59</ecNumber>
        </recommendedName>
    </domain>
    <domain>
        <recommendedName>
            <fullName evidence="1">[Protein-PII]-UMP uridylyl-removing enzyme</fullName>
            <shortName evidence="1">UR</shortName>
            <ecNumber evidence="1">3.1.4.-</ecNumber>
        </recommendedName>
    </domain>
</protein>
<proteinExistence type="inferred from homology"/>
<reference key="1">
    <citation type="journal article" date="2005" name="Nucleic Acids Res.">
        <title>The genome sequence of Xanthomonas oryzae pathovar oryzae KACC10331, the bacterial blight pathogen of rice.</title>
        <authorList>
            <person name="Lee B.-M."/>
            <person name="Park Y.-J."/>
            <person name="Park D.-S."/>
            <person name="Kang H.-W."/>
            <person name="Kim J.-G."/>
            <person name="Song E.-S."/>
            <person name="Park I.-C."/>
            <person name="Yoon U.-H."/>
            <person name="Hahn J.-H."/>
            <person name="Koo B.-S."/>
            <person name="Lee G.-B."/>
            <person name="Kim H."/>
            <person name="Park H.-S."/>
            <person name="Yoon K.-O."/>
            <person name="Kim J.-H."/>
            <person name="Jung C.-H."/>
            <person name="Koh N.-H."/>
            <person name="Seo J.-S."/>
            <person name="Go S.-J."/>
        </authorList>
    </citation>
    <scope>NUCLEOTIDE SEQUENCE [LARGE SCALE GENOMIC DNA]</scope>
    <source>
        <strain>KACC10331 / KXO85</strain>
    </source>
</reference>
<feature type="chain" id="PRO_0000192779" description="Bifunctional uridylyltransferase/uridylyl-removing enzyme">
    <location>
        <begin position="1"/>
        <end position="869"/>
    </location>
</feature>
<feature type="domain" description="HD" evidence="2">
    <location>
        <begin position="450"/>
        <end position="572"/>
    </location>
</feature>
<feature type="domain" description="ACT 1" evidence="1">
    <location>
        <begin position="692"/>
        <end position="774"/>
    </location>
</feature>
<feature type="domain" description="ACT 2" evidence="1">
    <location>
        <begin position="798"/>
        <end position="869"/>
    </location>
</feature>
<feature type="region of interest" description="Uridylyltransferase">
    <location>
        <begin position="1"/>
        <end position="332"/>
    </location>
</feature>
<feature type="region of interest" description="Uridylyl-removing">
    <location>
        <begin position="333"/>
        <end position="691"/>
    </location>
</feature>
<organism>
    <name type="scientific">Xanthomonas oryzae pv. oryzae (strain KACC10331 / KXO85)</name>
    <dbReference type="NCBI Taxonomy" id="291331"/>
    <lineage>
        <taxon>Bacteria</taxon>
        <taxon>Pseudomonadati</taxon>
        <taxon>Pseudomonadota</taxon>
        <taxon>Gammaproteobacteria</taxon>
        <taxon>Lysobacterales</taxon>
        <taxon>Lysobacteraceae</taxon>
        <taxon>Xanthomonas</taxon>
    </lineage>
</organism>
<comment type="function">
    <text evidence="1">Modifies, by uridylylation and deuridylylation, the PII regulatory proteins (GlnB and homologs), in response to the nitrogen status of the cell that GlnD senses through the glutamine level. Under low glutamine levels, catalyzes the conversion of the PII proteins and UTP to PII-UMP and PPi, while under higher glutamine levels, GlnD hydrolyzes PII-UMP to PII and UMP (deuridylylation). Thus, controls uridylylation state and activity of the PII proteins, and plays an important role in the regulation of nitrogen assimilation and metabolism.</text>
</comment>
<comment type="catalytic activity">
    <reaction evidence="1">
        <text>[protein-PII]-L-tyrosine + UTP = [protein-PII]-uridylyl-L-tyrosine + diphosphate</text>
        <dbReference type="Rhea" id="RHEA:13673"/>
        <dbReference type="Rhea" id="RHEA-COMP:12147"/>
        <dbReference type="Rhea" id="RHEA-COMP:12148"/>
        <dbReference type="ChEBI" id="CHEBI:33019"/>
        <dbReference type="ChEBI" id="CHEBI:46398"/>
        <dbReference type="ChEBI" id="CHEBI:46858"/>
        <dbReference type="ChEBI" id="CHEBI:90602"/>
        <dbReference type="EC" id="2.7.7.59"/>
    </reaction>
</comment>
<comment type="catalytic activity">
    <reaction evidence="1">
        <text>[protein-PII]-uridylyl-L-tyrosine + H2O = [protein-PII]-L-tyrosine + UMP + H(+)</text>
        <dbReference type="Rhea" id="RHEA:48600"/>
        <dbReference type="Rhea" id="RHEA-COMP:12147"/>
        <dbReference type="Rhea" id="RHEA-COMP:12148"/>
        <dbReference type="ChEBI" id="CHEBI:15377"/>
        <dbReference type="ChEBI" id="CHEBI:15378"/>
        <dbReference type="ChEBI" id="CHEBI:46858"/>
        <dbReference type="ChEBI" id="CHEBI:57865"/>
        <dbReference type="ChEBI" id="CHEBI:90602"/>
    </reaction>
</comment>
<comment type="cofactor">
    <cofactor evidence="1">
        <name>Mg(2+)</name>
        <dbReference type="ChEBI" id="CHEBI:18420"/>
    </cofactor>
</comment>
<comment type="activity regulation">
    <text evidence="1">Uridylyltransferase (UTase) activity is inhibited by glutamine, while glutamine activates uridylyl-removing (UR) activity.</text>
</comment>
<comment type="domain">
    <text evidence="1">Has four distinct domains: an N-terminal nucleotidyltransferase (NT) domain responsible for UTase activity, a central HD domain that encodes UR activity, and two C-terminal ACT domains that seem to have a role in glutamine sensing.</text>
</comment>
<comment type="similarity">
    <text evidence="1">Belongs to the GlnD family.</text>
</comment>
<comment type="sequence caution" evidence="3">
    <conflict type="erroneous initiation">
        <sequence resource="EMBL-CDS" id="AAW75238"/>
    </conflict>
</comment>